<accession>Q6GEF4</accession>
<evidence type="ECO:0000255" key="1">
    <source>
        <dbReference type="HAMAP-Rule" id="MF_00187"/>
    </source>
</evidence>
<keyword id="KW-0963">Cytoplasm</keyword>
<keyword id="KW-0501">Molybdenum cofactor biosynthesis</keyword>
<organism>
    <name type="scientific">Staphylococcus aureus (strain MRSA252)</name>
    <dbReference type="NCBI Taxonomy" id="282458"/>
    <lineage>
        <taxon>Bacteria</taxon>
        <taxon>Bacillati</taxon>
        <taxon>Bacillota</taxon>
        <taxon>Bacilli</taxon>
        <taxon>Bacillales</taxon>
        <taxon>Staphylococcaceae</taxon>
        <taxon>Staphylococcus</taxon>
    </lineage>
</organism>
<proteinExistence type="inferred from homology"/>
<name>FDHD_STAAR</name>
<protein>
    <recommendedName>
        <fullName evidence="1">Sulfur carrier protein FdhD</fullName>
    </recommendedName>
</protein>
<comment type="function">
    <text evidence="1">Required for formate dehydrogenase (FDH) activity. Acts as a sulfur carrier protein that transfers sulfur from IscS to the molybdenum cofactor prior to its insertion into FDH.</text>
</comment>
<comment type="subcellular location">
    <subcellularLocation>
        <location evidence="1">Cytoplasm</location>
    </subcellularLocation>
</comment>
<comment type="similarity">
    <text evidence="1">Belongs to the FdhD family.</text>
</comment>
<gene>
    <name evidence="1" type="primary">fdhD</name>
    <name type="ordered locus">SAR2364</name>
</gene>
<dbReference type="EMBL" id="BX571856">
    <property type="protein sequence ID" value="CAG41345.1"/>
    <property type="molecule type" value="Genomic_DNA"/>
</dbReference>
<dbReference type="RefSeq" id="WP_001030831.1">
    <property type="nucleotide sequence ID" value="NC_002952.2"/>
</dbReference>
<dbReference type="SMR" id="Q6GEF4"/>
<dbReference type="KEGG" id="sar:SAR2364"/>
<dbReference type="HOGENOM" id="CLU_056887_4_1_9"/>
<dbReference type="Proteomes" id="UP000000596">
    <property type="component" value="Chromosome"/>
</dbReference>
<dbReference type="GO" id="GO:0005737">
    <property type="term" value="C:cytoplasm"/>
    <property type="evidence" value="ECO:0007669"/>
    <property type="project" value="UniProtKB-SubCell"/>
</dbReference>
<dbReference type="GO" id="GO:0097163">
    <property type="term" value="F:sulfur carrier activity"/>
    <property type="evidence" value="ECO:0007669"/>
    <property type="project" value="UniProtKB-UniRule"/>
</dbReference>
<dbReference type="GO" id="GO:0016783">
    <property type="term" value="F:sulfurtransferase activity"/>
    <property type="evidence" value="ECO:0007669"/>
    <property type="project" value="InterPro"/>
</dbReference>
<dbReference type="GO" id="GO:0006777">
    <property type="term" value="P:Mo-molybdopterin cofactor biosynthetic process"/>
    <property type="evidence" value="ECO:0007669"/>
    <property type="project" value="UniProtKB-UniRule"/>
</dbReference>
<dbReference type="Gene3D" id="3.10.20.10">
    <property type="match status" value="1"/>
</dbReference>
<dbReference type="Gene3D" id="3.40.140.10">
    <property type="entry name" value="Cytidine Deaminase, domain 2"/>
    <property type="match status" value="1"/>
</dbReference>
<dbReference type="HAMAP" id="MF_00187">
    <property type="entry name" value="FdhD"/>
    <property type="match status" value="1"/>
</dbReference>
<dbReference type="InterPro" id="IPR016193">
    <property type="entry name" value="Cytidine_deaminase-like"/>
</dbReference>
<dbReference type="InterPro" id="IPR003786">
    <property type="entry name" value="FdhD"/>
</dbReference>
<dbReference type="NCBIfam" id="TIGR00129">
    <property type="entry name" value="fdhD_narQ"/>
    <property type="match status" value="1"/>
</dbReference>
<dbReference type="PANTHER" id="PTHR30592">
    <property type="entry name" value="FORMATE DEHYDROGENASE"/>
    <property type="match status" value="1"/>
</dbReference>
<dbReference type="PANTHER" id="PTHR30592:SF1">
    <property type="entry name" value="SULFUR CARRIER PROTEIN FDHD"/>
    <property type="match status" value="1"/>
</dbReference>
<dbReference type="Pfam" id="PF02634">
    <property type="entry name" value="FdhD-NarQ"/>
    <property type="match status" value="1"/>
</dbReference>
<dbReference type="PIRSF" id="PIRSF015626">
    <property type="entry name" value="FdhD"/>
    <property type="match status" value="1"/>
</dbReference>
<dbReference type="SUPFAM" id="SSF53927">
    <property type="entry name" value="Cytidine deaminase-like"/>
    <property type="match status" value="1"/>
</dbReference>
<feature type="chain" id="PRO_0000152925" description="Sulfur carrier protein FdhD">
    <location>
        <begin position="1"/>
        <end position="265"/>
    </location>
</feature>
<feature type="active site" description="Cysteine persulfide intermediate" evidence="1">
    <location>
        <position position="107"/>
    </location>
</feature>
<reference key="1">
    <citation type="journal article" date="2004" name="Proc. Natl. Acad. Sci. U.S.A.">
        <title>Complete genomes of two clinical Staphylococcus aureus strains: evidence for the rapid evolution of virulence and drug resistance.</title>
        <authorList>
            <person name="Holden M.T.G."/>
            <person name="Feil E.J."/>
            <person name="Lindsay J.A."/>
            <person name="Peacock S.J."/>
            <person name="Day N.P.J."/>
            <person name="Enright M.C."/>
            <person name="Foster T.J."/>
            <person name="Moore C.E."/>
            <person name="Hurst L."/>
            <person name="Atkin R."/>
            <person name="Barron A."/>
            <person name="Bason N."/>
            <person name="Bentley S.D."/>
            <person name="Chillingworth C."/>
            <person name="Chillingworth T."/>
            <person name="Churcher C."/>
            <person name="Clark L."/>
            <person name="Corton C."/>
            <person name="Cronin A."/>
            <person name="Doggett J."/>
            <person name="Dowd L."/>
            <person name="Feltwell T."/>
            <person name="Hance Z."/>
            <person name="Harris B."/>
            <person name="Hauser H."/>
            <person name="Holroyd S."/>
            <person name="Jagels K."/>
            <person name="James K.D."/>
            <person name="Lennard N."/>
            <person name="Line A."/>
            <person name="Mayes R."/>
            <person name="Moule S."/>
            <person name="Mungall K."/>
            <person name="Ormond D."/>
            <person name="Quail M.A."/>
            <person name="Rabbinowitsch E."/>
            <person name="Rutherford K.M."/>
            <person name="Sanders M."/>
            <person name="Sharp S."/>
            <person name="Simmonds M."/>
            <person name="Stevens K."/>
            <person name="Whitehead S."/>
            <person name="Barrell B.G."/>
            <person name="Spratt B.G."/>
            <person name="Parkhill J."/>
        </authorList>
    </citation>
    <scope>NUCLEOTIDE SEQUENCE [LARGE SCALE GENOMIC DNA]</scope>
    <source>
        <strain>MRSA252</strain>
    </source>
</reference>
<sequence length="265" mass="29399">MNKDVSLGQPIVRYEDGKLFNTTDQYVTEFPLTIMVNGEEFATVICSPTNLEELVIGFLASEGAILKRDELKSVLIDDSKGFAHVELNKDLGDRFQYSTKRMIASCCGKSREFYFQNDAAVAKTSMSKITLTPQQIINMMTRLQSASHIYQETGGLHNAALSDGLTFFVHRQDIGRHNALDKLYGFCIQRHITVRDKVLIFSGRISSEILIKAAKIGVGVILSKSAPTTLAVTLANDLNITAVGFIRNGGFNIYSHPERIIDSEQ</sequence>